<comment type="subcellular location">
    <subcellularLocation>
        <location evidence="1">Virion</location>
    </subcellularLocation>
</comment>
<comment type="induction">
    <text evidence="2">Expressed in the late phase of the viral replicative cycle.</text>
</comment>
<comment type="similarity">
    <text evidence="2">Belongs to the asfivirus E184L family.</text>
</comment>
<reference key="1">
    <citation type="journal article" date="1994" name="J. Gen. Virol.">
        <title>Nucleotide sequence of a 55 kbp region from the right end of the genome of a pathogenic African swine fever virus isolate (Malawi LIL20/1).</title>
        <authorList>
            <person name="Dixon L.K."/>
            <person name="Twigg S.R.F."/>
            <person name="Baylis S.A."/>
            <person name="Vydelingum S."/>
            <person name="Bristow C."/>
            <person name="Hammond J.M."/>
            <person name="Smith G.L."/>
        </authorList>
    </citation>
    <scope>NUCLEOTIDE SEQUENCE [GENOMIC DNA]</scope>
</reference>
<reference key="2">
    <citation type="submission" date="2003-03" db="EMBL/GenBank/DDBJ databases">
        <title>African swine fever virus genomes.</title>
        <authorList>
            <person name="Kutish G.F."/>
            <person name="Rock D.L."/>
        </authorList>
    </citation>
    <scope>NUCLEOTIDE SEQUENCE [LARGE SCALE GENOMIC DNA]</scope>
</reference>
<organismHost>
    <name type="scientific">Ornithodoros</name>
    <name type="common">relapsing fever ticks</name>
    <dbReference type="NCBI Taxonomy" id="6937"/>
</organismHost>
<organismHost>
    <name type="scientific">Phacochoerus aethiopicus</name>
    <name type="common">Warthog</name>
    <dbReference type="NCBI Taxonomy" id="85517"/>
</organismHost>
<organismHost>
    <name type="scientific">Phacochoerus africanus</name>
    <name type="common">Warthog</name>
    <dbReference type="NCBI Taxonomy" id="41426"/>
</organismHost>
<organismHost>
    <name type="scientific">Potamochoerus larvatus</name>
    <name type="common">Bushpig</name>
    <dbReference type="NCBI Taxonomy" id="273792"/>
</organismHost>
<organismHost>
    <name type="scientific">Sus scrofa</name>
    <name type="common">Pig</name>
    <dbReference type="NCBI Taxonomy" id="9823"/>
</organismHost>
<feature type="chain" id="PRO_0000373574" description="Uncharacterized protein E184L">
    <location>
        <begin position="1"/>
        <end position="184"/>
    </location>
</feature>
<gene>
    <name type="ordered locus">Mal-133</name>
    <name type="ORF">j12L</name>
</gene>
<sequence>MKTFITCTSVKNYFRQHLKTNQRISSELISYVCTILNHICHQYLQNPQAQEEEWFALIKELPIIKDGLSKEERFFSSGVKHFLHEYKITPENQEKFQKMLNAITEQLMSRLCKVFSIMIQRQGFLKTQTLMYSHLFTILNILMVADNLYGEQDPTEFFSLIIEQTKTIKKKKKSGSEEEESHEE</sequence>
<organism>
    <name type="scientific">African swine fever virus (isolate Tick/Malawi/Lil 20-1/1983)</name>
    <name type="common">ASFV</name>
    <dbReference type="NCBI Taxonomy" id="10500"/>
    <lineage>
        <taxon>Viruses</taxon>
        <taxon>Varidnaviria</taxon>
        <taxon>Bamfordvirae</taxon>
        <taxon>Nucleocytoviricota</taxon>
        <taxon>Pokkesviricetes</taxon>
        <taxon>Asfuvirales</taxon>
        <taxon>Asfarviridae</taxon>
        <taxon>Asfivirus</taxon>
        <taxon>African swine fever virus</taxon>
    </lineage>
</organism>
<proteinExistence type="inferred from homology"/>
<name>VF184_ASFM2</name>
<keyword id="KW-0426">Late protein</keyword>
<keyword id="KW-0946">Virion</keyword>
<dbReference type="EMBL" id="X71982">
    <property type="protein sequence ID" value="CAA50832.1"/>
    <property type="molecule type" value="Genomic_DNA"/>
</dbReference>
<dbReference type="EMBL" id="AY261361">
    <property type="status" value="NOT_ANNOTATED_CDS"/>
    <property type="molecule type" value="Genomic_DNA"/>
</dbReference>
<dbReference type="Proteomes" id="UP000000860">
    <property type="component" value="Segment"/>
</dbReference>
<dbReference type="GO" id="GO:0044423">
    <property type="term" value="C:virion component"/>
    <property type="evidence" value="ECO:0007669"/>
    <property type="project" value="UniProtKB-KW"/>
</dbReference>
<accession>Q65237</accession>
<protein>
    <recommendedName>
        <fullName>Uncharacterized protein E184L</fullName>
        <shortName>pE184L</shortName>
    </recommendedName>
</protein>
<evidence type="ECO:0000250" key="1">
    <source>
        <dbReference type="UniProtKB" id="Q65193"/>
    </source>
</evidence>
<evidence type="ECO:0000305" key="2"/>